<proteinExistence type="inferred from homology"/>
<organism>
    <name type="scientific">Wolinella succinogenes (strain ATCC 29543 / DSM 1740 / CCUG 13145 / JCM 31913 / LMG 7466 / NCTC 11488 / FDC 602W)</name>
    <name type="common">Vibrio succinogenes</name>
    <dbReference type="NCBI Taxonomy" id="273121"/>
    <lineage>
        <taxon>Bacteria</taxon>
        <taxon>Pseudomonadati</taxon>
        <taxon>Campylobacterota</taxon>
        <taxon>Epsilonproteobacteria</taxon>
        <taxon>Campylobacterales</taxon>
        <taxon>Helicobacteraceae</taxon>
        <taxon>Wolinella</taxon>
    </lineage>
</organism>
<evidence type="ECO:0000255" key="1">
    <source>
        <dbReference type="HAMAP-Rule" id="MF_01013"/>
    </source>
</evidence>
<protein>
    <recommendedName>
        <fullName evidence="1">Imidazole glycerol phosphate synthase subunit HisF</fullName>
        <ecNumber evidence="1">4.3.2.10</ecNumber>
    </recommendedName>
    <alternativeName>
        <fullName evidence="1">IGP synthase cyclase subunit</fullName>
    </alternativeName>
    <alternativeName>
        <fullName evidence="1">IGP synthase subunit HisF</fullName>
    </alternativeName>
    <alternativeName>
        <fullName evidence="1">ImGP synthase subunit HisF</fullName>
        <shortName evidence="1">IGPS subunit HisF</shortName>
    </alternativeName>
</protein>
<feature type="chain" id="PRO_0000142264" description="Imidazole glycerol phosphate synthase subunit HisF">
    <location>
        <begin position="1"/>
        <end position="254"/>
    </location>
</feature>
<feature type="active site" evidence="1">
    <location>
        <position position="13"/>
    </location>
</feature>
<feature type="active site" evidence="1">
    <location>
        <position position="132"/>
    </location>
</feature>
<reference key="1">
    <citation type="journal article" date="2003" name="Proc. Natl. Acad. Sci. U.S.A.">
        <title>Complete genome sequence and analysis of Wolinella succinogenes.</title>
        <authorList>
            <person name="Baar C."/>
            <person name="Eppinger M."/>
            <person name="Raddatz G."/>
            <person name="Simon J."/>
            <person name="Lanz C."/>
            <person name="Klimmek O."/>
            <person name="Nandakumar R."/>
            <person name="Gross R."/>
            <person name="Rosinus A."/>
            <person name="Keller H."/>
            <person name="Jagtap P."/>
            <person name="Linke B."/>
            <person name="Meyer F."/>
            <person name="Lederer H."/>
            <person name="Schuster S.C."/>
        </authorList>
    </citation>
    <scope>NUCLEOTIDE SEQUENCE [LARGE SCALE GENOMIC DNA]</scope>
    <source>
        <strain>ATCC 29543 / DSM 1740 / CCUG 13145 / JCM 31913 / LMG 7466 / NCTC 11488 / FDC 602W</strain>
    </source>
</reference>
<accession>Q7MAS1</accession>
<dbReference type="EC" id="4.3.2.10" evidence="1"/>
<dbReference type="EMBL" id="BX571657">
    <property type="protein sequence ID" value="CAE09233.1"/>
    <property type="molecule type" value="Genomic_DNA"/>
</dbReference>
<dbReference type="RefSeq" id="WP_011138033.1">
    <property type="nucleotide sequence ID" value="NC_005090.1"/>
</dbReference>
<dbReference type="SMR" id="Q7MAS1"/>
<dbReference type="STRING" id="273121.WS0064"/>
<dbReference type="KEGG" id="wsu:WS0064"/>
<dbReference type="eggNOG" id="COG0107">
    <property type="taxonomic scope" value="Bacteria"/>
</dbReference>
<dbReference type="HOGENOM" id="CLU_048577_4_0_7"/>
<dbReference type="UniPathway" id="UPA00031">
    <property type="reaction ID" value="UER00010"/>
</dbReference>
<dbReference type="Proteomes" id="UP000000422">
    <property type="component" value="Chromosome"/>
</dbReference>
<dbReference type="GO" id="GO:0005737">
    <property type="term" value="C:cytoplasm"/>
    <property type="evidence" value="ECO:0007669"/>
    <property type="project" value="UniProtKB-SubCell"/>
</dbReference>
<dbReference type="GO" id="GO:0000107">
    <property type="term" value="F:imidazoleglycerol-phosphate synthase activity"/>
    <property type="evidence" value="ECO:0007669"/>
    <property type="project" value="UniProtKB-UniRule"/>
</dbReference>
<dbReference type="GO" id="GO:0016829">
    <property type="term" value="F:lyase activity"/>
    <property type="evidence" value="ECO:0007669"/>
    <property type="project" value="UniProtKB-KW"/>
</dbReference>
<dbReference type="GO" id="GO:0000105">
    <property type="term" value="P:L-histidine biosynthetic process"/>
    <property type="evidence" value="ECO:0007669"/>
    <property type="project" value="UniProtKB-UniRule"/>
</dbReference>
<dbReference type="CDD" id="cd04731">
    <property type="entry name" value="HisF"/>
    <property type="match status" value="1"/>
</dbReference>
<dbReference type="FunFam" id="3.20.20.70:FF:000006">
    <property type="entry name" value="Imidazole glycerol phosphate synthase subunit HisF"/>
    <property type="match status" value="1"/>
</dbReference>
<dbReference type="Gene3D" id="3.20.20.70">
    <property type="entry name" value="Aldolase class I"/>
    <property type="match status" value="1"/>
</dbReference>
<dbReference type="HAMAP" id="MF_01013">
    <property type="entry name" value="HisF"/>
    <property type="match status" value="1"/>
</dbReference>
<dbReference type="InterPro" id="IPR013785">
    <property type="entry name" value="Aldolase_TIM"/>
</dbReference>
<dbReference type="InterPro" id="IPR006062">
    <property type="entry name" value="His_biosynth"/>
</dbReference>
<dbReference type="InterPro" id="IPR004651">
    <property type="entry name" value="HisF"/>
</dbReference>
<dbReference type="InterPro" id="IPR050064">
    <property type="entry name" value="IGPS_HisA/HisF"/>
</dbReference>
<dbReference type="InterPro" id="IPR011060">
    <property type="entry name" value="RibuloseP-bd_barrel"/>
</dbReference>
<dbReference type="NCBIfam" id="TIGR00735">
    <property type="entry name" value="hisF"/>
    <property type="match status" value="1"/>
</dbReference>
<dbReference type="PANTHER" id="PTHR21235:SF2">
    <property type="entry name" value="IMIDAZOLE GLYCEROL PHOSPHATE SYNTHASE HISHF"/>
    <property type="match status" value="1"/>
</dbReference>
<dbReference type="PANTHER" id="PTHR21235">
    <property type="entry name" value="IMIDAZOLE GLYCEROL PHOSPHATE SYNTHASE SUBUNIT HISF/H IGP SYNTHASE SUBUNIT HISF/H"/>
    <property type="match status" value="1"/>
</dbReference>
<dbReference type="Pfam" id="PF00977">
    <property type="entry name" value="His_biosynth"/>
    <property type="match status" value="1"/>
</dbReference>
<dbReference type="SUPFAM" id="SSF51366">
    <property type="entry name" value="Ribulose-phoshate binding barrel"/>
    <property type="match status" value="1"/>
</dbReference>
<comment type="function">
    <text evidence="1">IGPS catalyzes the conversion of PRFAR and glutamine to IGP, AICAR and glutamate. The HisF subunit catalyzes the cyclization activity that produces IGP and AICAR from PRFAR using the ammonia provided by the HisH subunit.</text>
</comment>
<comment type="catalytic activity">
    <reaction evidence="1">
        <text>5-[(5-phospho-1-deoxy-D-ribulos-1-ylimino)methylamino]-1-(5-phospho-beta-D-ribosyl)imidazole-4-carboxamide + L-glutamine = D-erythro-1-(imidazol-4-yl)glycerol 3-phosphate + 5-amino-1-(5-phospho-beta-D-ribosyl)imidazole-4-carboxamide + L-glutamate + H(+)</text>
        <dbReference type="Rhea" id="RHEA:24793"/>
        <dbReference type="ChEBI" id="CHEBI:15378"/>
        <dbReference type="ChEBI" id="CHEBI:29985"/>
        <dbReference type="ChEBI" id="CHEBI:58278"/>
        <dbReference type="ChEBI" id="CHEBI:58359"/>
        <dbReference type="ChEBI" id="CHEBI:58475"/>
        <dbReference type="ChEBI" id="CHEBI:58525"/>
        <dbReference type="EC" id="4.3.2.10"/>
    </reaction>
</comment>
<comment type="pathway">
    <text evidence="1">Amino-acid biosynthesis; L-histidine biosynthesis; L-histidine from 5-phospho-alpha-D-ribose 1-diphosphate: step 5/9.</text>
</comment>
<comment type="subunit">
    <text evidence="1">Heterodimer of HisH and HisF.</text>
</comment>
<comment type="subcellular location">
    <subcellularLocation>
        <location evidence="1">Cytoplasm</location>
    </subcellularLocation>
</comment>
<comment type="similarity">
    <text evidence="1">Belongs to the HisA/HisF family.</text>
</comment>
<sequence>MNPLAKRIIPCLDIKEGRVVKGVNFLGLRDAGDPVEVARRYNEEGADEIAFLDITATHERRDTMCDIVRAVAKEVFIPLTVGGGIRKLEDMYTLLNAGCDKVSINSSAIKNPSLIDEGAKRFGSQCIVVAIDAKSRADKSGWNVYINGGRIDTGIDLLEWTKEVYERGAGEILLTSMDADGTKAGYDCEQLQTLSKLVDIPLIASGGAGTMEHIKEAFLSGADAALAATIFHYKEIDIMDLKRYLRSEGIEVRL</sequence>
<keyword id="KW-0028">Amino-acid biosynthesis</keyword>
<keyword id="KW-0963">Cytoplasm</keyword>
<keyword id="KW-0368">Histidine biosynthesis</keyword>
<keyword id="KW-0456">Lyase</keyword>
<keyword id="KW-1185">Reference proteome</keyword>
<gene>
    <name evidence="1" type="primary">hisF</name>
    <name type="ordered locus">WS0064</name>
</gene>
<name>HIS6_WOLSU</name>